<sequence>MSKKNQQISPVLDNIVTSLLQSLSDSDESVRSTVVNSLYEIGFRQPNFVLQVACDYINKNQKIDQTHRVKILNSILQILEQTRNQLTDALSLNLIAMSISEMTRDKEVVPDWQQVASSLLVSLGLRYPSQIMDELLKRFEPGTLPHYFVMKTLGDFISSNPIPTVPKIREILSRILPVLGTIKHDNFKWVFAAALGHFADAIVQYVANIDTAPDKSLTLYSFSSEFYPALELMFSKWLGTNHEKVRLVTIEAVGSICSILSVEQLESQIQKLVVGVLSMLKKEKDLLPVTHSLCCILEVCVKNDLKLQVNELLIPIMTTLHPLVCIVPDYSNPASTKTYNEVLRCFEVIGRGYSDVLISFLNQRLENRDLRSRAGSLSIIRHIVTRLDVELADKKPLILSAIKPLIQTEPSLFIKKYLAQIIIAMAPYGYLEMEGGLTLLEFIVKGSSWYQDSEIGKAQPTQPPKKIENPDLHVTDSELRLICDNILNLITTTMPQLESILWPYLFEFILPEQYTAAIPVVTKSLTYIALSKKSVDSDDYYIDFDKEINLPKPTQIIARYFVLLTAPLRRNQLGIRILENMKAIGPILHPSICDMWDVTLPKLISYLEDHTDIETWNKNQWEELVLRLLSETIKNAADDEWTVALGNSMSEQIDHYKKDPILKRSLYKQMGLIMQKCSHKEFVKSKIEVMFTSVDYTNSLENEGCAIGLGYCGASHFDIVLEKINFYIKNSMVKKSGFFGKKGPKGIKNCILLSLGYSATYAQSALFSSRVEVHVIQPIKPSILQLKKVPKKLSSIKMIDLIGKALHPNKASTFIFKQRDELMKLLISYMSTPPPSTNNQVKIDGTNACSTLVNLEPMISLELEVQIINLSLSFFNQQVSPANATNTDSDEYKEVNSLITSVNNLLSTILYNQTTIACLNRLIGYLDPLSRSKDAHIRERSLFCILYLVKKFIEYSTDSDSMPTDKLFDSIGTTLSVLIPRCTDPEINVRRYAVESIQLILYIGFMLKNATPDNRRVKPSEVLHPLTSIRDSITTTEVNEQFSLVFEISVIISKMISLEEIPKFLEGSIKGLQDLQAFSTNGSCIIINGLIKTRGEELIEYVPILVKGLLTAMEGITSETTMNGTLVSLRSLANHHLIPVLSVLLEYPMPHSVHVIKSFQIIAKDKNLISPTLIHLMDLLNNKPVYEEKPDPKNKNRIIPQPFAIALAATCSLGEIFQLTEVEEVVKYFYHQLISTLVLRAGTCNNSLPCLIEVASTNPKAKASAISLIPSQQMLVTFRQFFKCTKEEETLLAEIESKGSFSQLETPFYHQGIIEILSVVSSHHPDLIQGIFQYLLPYQRSNHLEHRIVTISVTTELINHCKDKELIQRLINTLLNSLVDPLVKLISLKGLSNIVSAGVEQTNRYAPTVIDALSTSIDDQDETMAMECMLGLSKIFEVADEGRVAPILVNICNRIRPAFEKPNDSIRAASFQLFGSLWRFGSGSACDPFYEQIHSSLPSLIMHLNDDVQSVKNSCKKTLFQLSTLMRSQDAMDYFNNKSKGFVGDNDQPNYEEFLLDFSKLLIINYPERVNYFVMTVIEFFKSTWVNLRGNAATFIGFILGNLTEDKRTQTNINSTILTKSLVGLLAEKSPAVRKKAAESLGLLHHY</sequence>
<comment type="function">
    <text evidence="1">Lysosome fission factor.</text>
</comment>
<comment type="subunit">
    <text evidence="1">Homooligomer.</text>
</comment>
<comment type="subcellular location">
    <subcellularLocation>
        <location evidence="1">Lysosome membrane</location>
    </subcellularLocation>
</comment>
<comment type="similarity">
    <text evidence="2">Belongs to the MROH1 family.</text>
</comment>
<dbReference type="EMBL" id="AAFI02000175">
    <property type="protein sequence ID" value="EAL61864.1"/>
    <property type="molecule type" value="Genomic_DNA"/>
</dbReference>
<dbReference type="RefSeq" id="XP_635367.1">
    <property type="nucleotide sequence ID" value="XM_630275.1"/>
</dbReference>
<dbReference type="FunCoup" id="Q54F23">
    <property type="interactions" value="213"/>
</dbReference>
<dbReference type="STRING" id="44689.Q54F23"/>
<dbReference type="PaxDb" id="44689-DDB0189282"/>
<dbReference type="EnsemblProtists" id="EAL61864">
    <property type="protein sequence ID" value="EAL61864"/>
    <property type="gene ID" value="DDB_G0291161"/>
</dbReference>
<dbReference type="GeneID" id="8628015"/>
<dbReference type="KEGG" id="ddi:DDB_G0291161"/>
<dbReference type="dictyBase" id="DDB_G0291161">
    <property type="gene designation" value="mroh1"/>
</dbReference>
<dbReference type="VEuPathDB" id="AmoebaDB:DDB_G0291161"/>
<dbReference type="eggNOG" id="KOG2032">
    <property type="taxonomic scope" value="Eukaryota"/>
</dbReference>
<dbReference type="HOGENOM" id="CLU_003168_0_1_1"/>
<dbReference type="InParanoid" id="Q54F23"/>
<dbReference type="OMA" id="EVYIKAM"/>
<dbReference type="PhylomeDB" id="Q54F23"/>
<dbReference type="PRO" id="PR:Q54F23"/>
<dbReference type="Proteomes" id="UP000002195">
    <property type="component" value="Chromosome 5"/>
</dbReference>
<dbReference type="GO" id="GO:0005737">
    <property type="term" value="C:cytoplasm"/>
    <property type="evidence" value="ECO:0000318"/>
    <property type="project" value="GO_Central"/>
</dbReference>
<dbReference type="GO" id="GO:0005764">
    <property type="term" value="C:lysosome"/>
    <property type="evidence" value="ECO:0000314"/>
    <property type="project" value="dictyBase"/>
</dbReference>
<dbReference type="GO" id="GO:0071203">
    <property type="term" value="C:WASH complex"/>
    <property type="evidence" value="ECO:0000314"/>
    <property type="project" value="dictyBase"/>
</dbReference>
<dbReference type="GO" id="GO:0006887">
    <property type="term" value="P:exocytosis"/>
    <property type="evidence" value="ECO:0000315"/>
    <property type="project" value="dictyBase"/>
</dbReference>
<dbReference type="Gene3D" id="1.25.10.10">
    <property type="entry name" value="Leucine-rich Repeat Variant"/>
    <property type="match status" value="4"/>
</dbReference>
<dbReference type="InterPro" id="IPR011989">
    <property type="entry name" value="ARM-like"/>
</dbReference>
<dbReference type="InterPro" id="IPR016024">
    <property type="entry name" value="ARM-type_fold"/>
</dbReference>
<dbReference type="InterPro" id="IPR055406">
    <property type="entry name" value="HEAT_Maestro"/>
</dbReference>
<dbReference type="InterPro" id="IPR055408">
    <property type="entry name" value="HEAT_MROH2B-like"/>
</dbReference>
<dbReference type="InterPro" id="IPR048465">
    <property type="entry name" value="Maestro-like_HEAT"/>
</dbReference>
<dbReference type="InterPro" id="IPR045206">
    <property type="entry name" value="Maestro_heat-like_prot"/>
</dbReference>
<dbReference type="InterPro" id="IPR056282">
    <property type="entry name" value="MROH2B-like_N_HEAT"/>
</dbReference>
<dbReference type="PANTHER" id="PTHR23120:SF0">
    <property type="entry name" value="MAESTRO HEAT-LIKE REPEAT FAMILY MEMBER 1"/>
    <property type="match status" value="1"/>
</dbReference>
<dbReference type="PANTHER" id="PTHR23120">
    <property type="entry name" value="MAESTRO-RELATED HEAT DOMAIN-CONTAINING"/>
    <property type="match status" value="1"/>
</dbReference>
<dbReference type="Pfam" id="PF21047">
    <property type="entry name" value="HEAT_Maestro"/>
    <property type="match status" value="1"/>
</dbReference>
<dbReference type="Pfam" id="PF23210">
    <property type="entry name" value="HEAT_Maestro_2"/>
    <property type="match status" value="1"/>
</dbReference>
<dbReference type="Pfam" id="PF23221">
    <property type="entry name" value="HEAT_MROH2B_1st"/>
    <property type="match status" value="1"/>
</dbReference>
<dbReference type="Pfam" id="PF23227">
    <property type="entry name" value="HEAT_MROH2B_C"/>
    <property type="match status" value="1"/>
</dbReference>
<dbReference type="SUPFAM" id="SSF48371">
    <property type="entry name" value="ARM repeat"/>
    <property type="match status" value="2"/>
</dbReference>
<proteinExistence type="inferred from homology"/>
<gene>
    <name type="primary">mroh1</name>
    <name type="synonym">heatr7a</name>
    <name type="ORF">DDB_G0291161</name>
</gene>
<protein>
    <recommendedName>
        <fullName>Maestro heat-like repeat-containing protein family member 1</fullName>
    </recommendedName>
    <alternativeName>
        <fullName>HEAT repeat-containing protein 7A homolog</fullName>
    </alternativeName>
</protein>
<evidence type="ECO:0000250" key="1">
    <source>
        <dbReference type="UniProtKB" id="Q8NDA8"/>
    </source>
</evidence>
<evidence type="ECO:0000305" key="2"/>
<name>MROH1_DICDI</name>
<feature type="chain" id="PRO_0000329403" description="Maestro heat-like repeat-containing protein family member 1">
    <location>
        <begin position="1"/>
        <end position="1647"/>
    </location>
</feature>
<feature type="repeat" description="HEAT 1">
    <location>
        <begin position="9"/>
        <end position="47"/>
    </location>
</feature>
<feature type="repeat" description="HEAT 2">
    <location>
        <begin position="65"/>
        <end position="103"/>
    </location>
</feature>
<feature type="repeat" description="HEAT 3">
    <location>
        <begin position="224"/>
        <end position="262"/>
    </location>
</feature>
<feature type="repeat" description="HEAT 4">
    <location>
        <begin position="351"/>
        <end position="389"/>
    </location>
</feature>
<feature type="repeat" description="HEAT 5">
    <location>
        <begin position="597"/>
        <end position="635"/>
    </location>
</feature>
<feature type="repeat" description="HEAT 6">
    <location>
        <begin position="968"/>
        <end position="1006"/>
    </location>
</feature>
<feature type="repeat" description="HEAT 7">
    <location>
        <begin position="1131"/>
        <end position="1168"/>
    </location>
</feature>
<feature type="repeat" description="HEAT 8">
    <location>
        <begin position="1364"/>
        <end position="1400"/>
    </location>
</feature>
<feature type="repeat" description="HEAT 9">
    <location>
        <begin position="1403"/>
        <end position="1441"/>
    </location>
</feature>
<feature type="repeat" description="HEAT 10">
    <location>
        <begin position="1490"/>
        <end position="1528"/>
    </location>
</feature>
<feature type="repeat" description="HEAT 11">
    <location>
        <begin position="1612"/>
        <end position="1647"/>
    </location>
</feature>
<organism>
    <name type="scientific">Dictyostelium discoideum</name>
    <name type="common">Social amoeba</name>
    <dbReference type="NCBI Taxonomy" id="44689"/>
    <lineage>
        <taxon>Eukaryota</taxon>
        <taxon>Amoebozoa</taxon>
        <taxon>Evosea</taxon>
        <taxon>Eumycetozoa</taxon>
        <taxon>Dictyostelia</taxon>
        <taxon>Dictyosteliales</taxon>
        <taxon>Dictyosteliaceae</taxon>
        <taxon>Dictyostelium</taxon>
    </lineage>
</organism>
<keyword id="KW-0458">Lysosome</keyword>
<keyword id="KW-0472">Membrane</keyword>
<keyword id="KW-1185">Reference proteome</keyword>
<keyword id="KW-0677">Repeat</keyword>
<accession>Q54F23</accession>
<reference key="1">
    <citation type="journal article" date="2005" name="Nature">
        <title>The genome of the social amoeba Dictyostelium discoideum.</title>
        <authorList>
            <person name="Eichinger L."/>
            <person name="Pachebat J.A."/>
            <person name="Gloeckner G."/>
            <person name="Rajandream M.A."/>
            <person name="Sucgang R."/>
            <person name="Berriman M."/>
            <person name="Song J."/>
            <person name="Olsen R."/>
            <person name="Szafranski K."/>
            <person name="Xu Q."/>
            <person name="Tunggal B."/>
            <person name="Kummerfeld S."/>
            <person name="Madera M."/>
            <person name="Konfortov B.A."/>
            <person name="Rivero F."/>
            <person name="Bankier A.T."/>
            <person name="Lehmann R."/>
            <person name="Hamlin N."/>
            <person name="Davies R."/>
            <person name="Gaudet P."/>
            <person name="Fey P."/>
            <person name="Pilcher K."/>
            <person name="Chen G."/>
            <person name="Saunders D."/>
            <person name="Sodergren E.J."/>
            <person name="Davis P."/>
            <person name="Kerhornou A."/>
            <person name="Nie X."/>
            <person name="Hall N."/>
            <person name="Anjard C."/>
            <person name="Hemphill L."/>
            <person name="Bason N."/>
            <person name="Farbrother P."/>
            <person name="Desany B."/>
            <person name="Just E."/>
            <person name="Morio T."/>
            <person name="Rost R."/>
            <person name="Churcher C.M."/>
            <person name="Cooper J."/>
            <person name="Haydock S."/>
            <person name="van Driessche N."/>
            <person name="Cronin A."/>
            <person name="Goodhead I."/>
            <person name="Muzny D.M."/>
            <person name="Mourier T."/>
            <person name="Pain A."/>
            <person name="Lu M."/>
            <person name="Harper D."/>
            <person name="Lindsay R."/>
            <person name="Hauser H."/>
            <person name="James K.D."/>
            <person name="Quiles M."/>
            <person name="Madan Babu M."/>
            <person name="Saito T."/>
            <person name="Buchrieser C."/>
            <person name="Wardroper A."/>
            <person name="Felder M."/>
            <person name="Thangavelu M."/>
            <person name="Johnson D."/>
            <person name="Knights A."/>
            <person name="Loulseged H."/>
            <person name="Mungall K.L."/>
            <person name="Oliver K."/>
            <person name="Price C."/>
            <person name="Quail M.A."/>
            <person name="Urushihara H."/>
            <person name="Hernandez J."/>
            <person name="Rabbinowitsch E."/>
            <person name="Steffen D."/>
            <person name="Sanders M."/>
            <person name="Ma J."/>
            <person name="Kohara Y."/>
            <person name="Sharp S."/>
            <person name="Simmonds M.N."/>
            <person name="Spiegler S."/>
            <person name="Tivey A."/>
            <person name="Sugano S."/>
            <person name="White B."/>
            <person name="Walker D."/>
            <person name="Woodward J.R."/>
            <person name="Winckler T."/>
            <person name="Tanaka Y."/>
            <person name="Shaulsky G."/>
            <person name="Schleicher M."/>
            <person name="Weinstock G.M."/>
            <person name="Rosenthal A."/>
            <person name="Cox E.C."/>
            <person name="Chisholm R.L."/>
            <person name="Gibbs R.A."/>
            <person name="Loomis W.F."/>
            <person name="Platzer M."/>
            <person name="Kay R.R."/>
            <person name="Williams J.G."/>
            <person name="Dear P.H."/>
            <person name="Noegel A.A."/>
            <person name="Barrell B.G."/>
            <person name="Kuspa A."/>
        </authorList>
    </citation>
    <scope>NUCLEOTIDE SEQUENCE [LARGE SCALE GENOMIC DNA]</scope>
    <source>
        <strain>AX4</strain>
    </source>
</reference>